<reference key="1">
    <citation type="journal article" date="1982" name="Proc. Natl. Acad. Sci. U.S.A.">
        <title>Subunit structure of the acetylcholine receptor from Electrophorus electricus.</title>
        <authorList>
            <person name="Conti-Tronconi B.M."/>
            <person name="Hunkapiller M.W."/>
            <person name="Lindstrom J.M."/>
            <person name="Raftery M.A."/>
        </authorList>
    </citation>
    <scope>PROTEIN SEQUENCE</scope>
</reference>
<evidence type="ECO:0000250" key="1">
    <source>
        <dbReference type="UniProtKB" id="P02708"/>
    </source>
</evidence>
<evidence type="ECO:0000250" key="2">
    <source>
        <dbReference type="UniProtKB" id="P02709"/>
    </source>
</evidence>
<evidence type="ECO:0000255" key="3"/>
<evidence type="ECO:0000305" key="4"/>
<gene>
    <name type="primary">chrna1</name>
</gene>
<organism>
    <name type="scientific">Electrophorus electricus</name>
    <name type="common">Electric eel</name>
    <name type="synonym">Gymnotus electricus</name>
    <dbReference type="NCBI Taxonomy" id="8005"/>
    <lineage>
        <taxon>Eukaryota</taxon>
        <taxon>Metazoa</taxon>
        <taxon>Chordata</taxon>
        <taxon>Craniata</taxon>
        <taxon>Vertebrata</taxon>
        <taxon>Euteleostomi</taxon>
        <taxon>Actinopterygii</taxon>
        <taxon>Neopterygii</taxon>
        <taxon>Teleostei</taxon>
        <taxon>Ostariophysi</taxon>
        <taxon>Gymnotiformes</taxon>
        <taxon>Gymnotoidei</taxon>
        <taxon>Gymnotidae</taxon>
        <taxon>Electrophorus</taxon>
    </lineage>
</organism>
<feature type="chain" id="PRO_0000076974" description="Acetylcholine receptor subunit alpha">
    <location>
        <begin position="1"/>
        <end position="24" status="greater than"/>
    </location>
</feature>
<feature type="non-terminal residue">
    <location>
        <position position="24"/>
    </location>
</feature>
<sequence length="24" mass="2802">SEDETRLVKNLFSGYNKVVRPVNH</sequence>
<accession>P09688</accession>
<protein>
    <recommendedName>
        <fullName>Acetylcholine receptor subunit alpha</fullName>
    </recommendedName>
</protein>
<comment type="function">
    <text evidence="1">Upon acetylcholine binding, the AChR responds by an extensive change in conformation that affects all subunits and leads to opening of an ion-conducting channel across the plasma membrane.</text>
</comment>
<comment type="catalytic activity">
    <reaction evidence="2">
        <text>K(+)(in) = K(+)(out)</text>
        <dbReference type="Rhea" id="RHEA:29463"/>
        <dbReference type="ChEBI" id="CHEBI:29103"/>
    </reaction>
</comment>
<comment type="catalytic activity">
    <reaction evidence="2">
        <text>Na(+)(in) = Na(+)(out)</text>
        <dbReference type="Rhea" id="RHEA:34963"/>
        <dbReference type="ChEBI" id="CHEBI:29101"/>
    </reaction>
</comment>
<comment type="subunit">
    <text evidence="1">One of the alpha chains that assemble within the acetylcholine receptor, a pentamer of two alpha chains, a beta, a delta, and a gamma or epsilon chains.</text>
</comment>
<comment type="subcellular location">
    <subcellularLocation>
        <location evidence="1">Postsynaptic cell membrane</location>
        <topology evidence="3">Multi-pass membrane protein</topology>
    </subcellularLocation>
    <subcellularLocation>
        <location evidence="1">Cell membrane</location>
        <topology evidence="3">Multi-pass membrane protein</topology>
    </subcellularLocation>
</comment>
<comment type="similarity">
    <text evidence="4">Belongs to the ligand-gated ion channel (TC 1.A.9) family. Acetylcholine receptor (TC 1.A.9.1) subfamily. Alpha-1/CHRNA1 sub-subfamily.</text>
</comment>
<dbReference type="PIR" id="A27262">
    <property type="entry name" value="A27262"/>
</dbReference>
<dbReference type="STRING" id="8005.ENSEEEP00000009993"/>
<dbReference type="Proteomes" id="UP000314983">
    <property type="component" value="Unassembled WGS sequence"/>
</dbReference>
<dbReference type="GO" id="GO:0045211">
    <property type="term" value="C:postsynaptic membrane"/>
    <property type="evidence" value="ECO:0007669"/>
    <property type="project" value="UniProtKB-SubCell"/>
</dbReference>
<dbReference type="GO" id="GO:0005230">
    <property type="term" value="F:extracellular ligand-gated monoatomic ion channel activity"/>
    <property type="evidence" value="ECO:0007669"/>
    <property type="project" value="InterPro"/>
</dbReference>
<dbReference type="InterPro" id="IPR036734">
    <property type="entry name" value="Neur_chan_lig-bd_sf"/>
</dbReference>
<dbReference type="SUPFAM" id="SSF63712">
    <property type="entry name" value="Nicotinic receptor ligand binding domain-like"/>
    <property type="match status" value="1"/>
</dbReference>
<keyword id="KW-1003">Cell membrane</keyword>
<keyword id="KW-0903">Direct protein sequencing</keyword>
<keyword id="KW-0407">Ion channel</keyword>
<keyword id="KW-0406">Ion transport</keyword>
<keyword id="KW-1071">Ligand-gated ion channel</keyword>
<keyword id="KW-0472">Membrane</keyword>
<keyword id="KW-0628">Postsynaptic cell membrane</keyword>
<keyword id="KW-0675">Receptor</keyword>
<keyword id="KW-1185">Reference proteome</keyword>
<keyword id="KW-0770">Synapse</keyword>
<keyword id="KW-0812">Transmembrane</keyword>
<keyword id="KW-0813">Transport</keyword>
<name>ACHA_ELEEL</name>
<proteinExistence type="evidence at protein level"/>